<comment type="function">
    <text evidence="1">Catalyzes the GTP-dependent ribosomal translocation step during translation elongation. During this step, the ribosome changes from the pre-translocational (PRE) to the post-translocational (POST) state as the newly formed A-site-bound peptidyl-tRNA and P-site-bound deacylated tRNA move to the P and E sites, respectively. Catalyzes the coordinated movement of the two tRNA molecules, the mRNA and conformational changes in the ribosome (By similarity).</text>
</comment>
<comment type="subcellular location">
    <subcellularLocation>
        <location evidence="1">Cytoplasm</location>
    </subcellularLocation>
</comment>
<comment type="similarity">
    <text evidence="2">Belongs to the TRAFAC class translation factor GTPase superfamily. Classic translation factor GTPase family. EF-G/EF-2 subfamily.</text>
</comment>
<feature type="chain" id="PRO_0000091156" description="Elongation factor G">
    <location>
        <begin position="1"/>
        <end position="688"/>
    </location>
</feature>
<feature type="domain" description="tr-type G">
    <location>
        <begin position="8"/>
        <end position="282"/>
    </location>
</feature>
<feature type="binding site" evidence="1">
    <location>
        <begin position="17"/>
        <end position="24"/>
    </location>
    <ligand>
        <name>GTP</name>
        <dbReference type="ChEBI" id="CHEBI:37565"/>
    </ligand>
</feature>
<feature type="binding site" evidence="1">
    <location>
        <begin position="81"/>
        <end position="85"/>
    </location>
    <ligand>
        <name>GTP</name>
        <dbReference type="ChEBI" id="CHEBI:37565"/>
    </ligand>
</feature>
<feature type="binding site" evidence="1">
    <location>
        <begin position="135"/>
        <end position="138"/>
    </location>
    <ligand>
        <name>GTP</name>
        <dbReference type="ChEBI" id="CHEBI:37565"/>
    </ligand>
</feature>
<feature type="sequence conflict" description="In Ref. 2; AAC43197." evidence="2" ref="2">
    <original>NK</original>
    <variation>KQ</variation>
    <location>
        <begin position="345"/>
        <end position="346"/>
    </location>
</feature>
<feature type="sequence conflict" description="In Ref. 2." evidence="2" ref="2">
    <original>N</original>
    <variation>M</variation>
    <location>
        <position position="514"/>
    </location>
</feature>
<feature type="sequence conflict" description="In Ref. 2; AAD12412." evidence="2" ref="2">
    <original>S</original>
    <variation>Y</variation>
    <location>
        <position position="657"/>
    </location>
</feature>
<organism>
    <name type="scientific">Mycoplasma genitalium (strain ATCC 33530 / DSM 19775 / NCTC 10195 / G37)</name>
    <name type="common">Mycoplasmoides genitalium</name>
    <dbReference type="NCBI Taxonomy" id="243273"/>
    <lineage>
        <taxon>Bacteria</taxon>
        <taxon>Bacillati</taxon>
        <taxon>Mycoplasmatota</taxon>
        <taxon>Mycoplasmoidales</taxon>
        <taxon>Mycoplasmoidaceae</taxon>
        <taxon>Mycoplasmoides</taxon>
    </lineage>
</organism>
<reference key="1">
    <citation type="journal article" date="1995" name="Science">
        <title>The minimal gene complement of Mycoplasma genitalium.</title>
        <authorList>
            <person name="Fraser C.M."/>
            <person name="Gocayne J.D."/>
            <person name="White O."/>
            <person name="Adams M.D."/>
            <person name="Clayton R.A."/>
            <person name="Fleischmann R.D."/>
            <person name="Bult C.J."/>
            <person name="Kerlavage A.R."/>
            <person name="Sutton G.G."/>
            <person name="Kelley J.M."/>
            <person name="Fritchman J.L."/>
            <person name="Weidman J.F."/>
            <person name="Small K.V."/>
            <person name="Sandusky M."/>
            <person name="Fuhrmann J.L."/>
            <person name="Nguyen D.T."/>
            <person name="Utterback T.R."/>
            <person name="Saudek D.M."/>
            <person name="Phillips C.A."/>
            <person name="Merrick J.M."/>
            <person name="Tomb J.-F."/>
            <person name="Dougherty B.A."/>
            <person name="Bott K.F."/>
            <person name="Hu P.-C."/>
            <person name="Lucier T.S."/>
            <person name="Peterson S.N."/>
            <person name="Smith H.O."/>
            <person name="Hutchison C.A. III"/>
            <person name="Venter J.C."/>
        </authorList>
    </citation>
    <scope>NUCLEOTIDE SEQUENCE [LARGE SCALE GENOMIC DNA]</scope>
    <source>
        <strain>ATCC 33530 / DSM 19775 / NCTC 10195 / G37</strain>
    </source>
</reference>
<reference key="2">
    <citation type="journal article" date="1993" name="J. Bacteriol.">
        <title>A survey of the Mycoplasma genitalium genome by using random sequencing.</title>
        <authorList>
            <person name="Peterson S.N."/>
            <person name="Hu P.-C."/>
            <person name="Bott K.F."/>
            <person name="Hutchison C.A. III"/>
        </authorList>
    </citation>
    <scope>NUCLEOTIDE SEQUENCE [GENOMIC DNA] OF 230-458; 514-626 AND 629-688</scope>
    <source>
        <strain>ATCC 33530 / DSM 19775 / NCTC 10195 / G37</strain>
    </source>
</reference>
<keyword id="KW-0963">Cytoplasm</keyword>
<keyword id="KW-0251">Elongation factor</keyword>
<keyword id="KW-0342">GTP-binding</keyword>
<keyword id="KW-0547">Nucleotide-binding</keyword>
<keyword id="KW-0648">Protein biosynthesis</keyword>
<keyword id="KW-1185">Reference proteome</keyword>
<name>EFG_MYCGE</name>
<sequence length="688" mass="76539">MSRTVDLKNFRNFGIMAHIDAGKTTTSERILFHSGRIHKIGETHDGESVMDWMEQEKERGITITSAATSVSWKNCSLNLIDTPGHVDFTVEVERSLRVLDGAIAVLDAQMGVEPQTETVWRQASRYEVPRVIFVNKMDKTGANFERSVLSIQQRLGVKAVPIQFPIGAENDFNGIIDIITKKAYFFDGNKEENAIEKPIPEQYVDQVEKLYNNLVEEVASLDDQLMADYLDGKPIEIDAIKNAIRNGVIHCKFFPVLCGSAFKNKGIKLLLDAVVDFLPSPVDVPPAKAIDANNKEISIKASDDANFIGLAFKVATDPFVGRLTFIRVYAGVLKSGSYVKNVRKNKKERVSRLVKMHAQNRNEIDEIRAGDICAVIGLKDTTTGETLTDDKLDVQLEAMQFAEPVISLAVEPKTKADQEKMSIALSKLAEEDPTFKTFSDPETGQTIIAGMGELHLDILVDRMKREFKVEVNIGAPQVSFRETFKSTSEVEGKYIKQSGGRGQYGHVKIRFEPNKDKGFEFVDKIVGGRIPREYIKPVQTGLENAMNSGPLAGYPMIDIKATLFDGSFHEVDSSEMAFKIAASLALKEAGKQCNPVLLEPIMAIEVTVPEQYFGDTMGDISSRRGIIEGTEQRDNVQLIKAKVPLKEMFGYATDLRSFSQGRGNYVMQFSHYAETPKSVVNEIIANKK</sequence>
<gene>
    <name type="primary">fusA</name>
    <name type="synonym">fus</name>
    <name type="ordered locus">MG089</name>
</gene>
<evidence type="ECO:0000250" key="1"/>
<evidence type="ECO:0000305" key="2"/>
<protein>
    <recommendedName>
        <fullName>Elongation factor G</fullName>
        <shortName>EF-G</shortName>
    </recommendedName>
</protein>
<dbReference type="EMBL" id="L43967">
    <property type="protein sequence ID" value="AAC71307.1"/>
    <property type="molecule type" value="Genomic_DNA"/>
</dbReference>
<dbReference type="EMBL" id="U01722">
    <property type="protein sequence ID" value="AAC43197.1"/>
    <property type="molecule type" value="Unassigned_DNA"/>
</dbReference>
<dbReference type="EMBL" id="U02180">
    <property type="protein sequence ID" value="AAD12466.1"/>
    <property type="molecule type" value="Genomic_DNA"/>
</dbReference>
<dbReference type="EMBL" id="U02136">
    <property type="protein sequence ID" value="AAD12412.1"/>
    <property type="molecule type" value="Genomic_DNA"/>
</dbReference>
<dbReference type="PIR" id="H64209">
    <property type="entry name" value="H64209"/>
</dbReference>
<dbReference type="RefSeq" id="WP_009885646.1">
    <property type="nucleotide sequence ID" value="NC_000908.2"/>
</dbReference>
<dbReference type="SMR" id="P47335"/>
<dbReference type="FunCoup" id="P47335">
    <property type="interactions" value="207"/>
</dbReference>
<dbReference type="STRING" id="243273.MG_089"/>
<dbReference type="GeneID" id="88282212"/>
<dbReference type="KEGG" id="mge:MG_089"/>
<dbReference type="eggNOG" id="COG0480">
    <property type="taxonomic scope" value="Bacteria"/>
</dbReference>
<dbReference type="HOGENOM" id="CLU_002794_4_1_14"/>
<dbReference type="InParanoid" id="P47335"/>
<dbReference type="OrthoDB" id="9804431at2"/>
<dbReference type="BioCyc" id="MGEN243273:G1GJ2-101-MONOMER"/>
<dbReference type="Proteomes" id="UP000000807">
    <property type="component" value="Chromosome"/>
</dbReference>
<dbReference type="GO" id="GO:0005737">
    <property type="term" value="C:cytoplasm"/>
    <property type="evidence" value="ECO:0007669"/>
    <property type="project" value="UniProtKB-SubCell"/>
</dbReference>
<dbReference type="GO" id="GO:0005525">
    <property type="term" value="F:GTP binding"/>
    <property type="evidence" value="ECO:0007669"/>
    <property type="project" value="UniProtKB-UniRule"/>
</dbReference>
<dbReference type="GO" id="GO:0003924">
    <property type="term" value="F:GTPase activity"/>
    <property type="evidence" value="ECO:0007669"/>
    <property type="project" value="InterPro"/>
</dbReference>
<dbReference type="GO" id="GO:0003746">
    <property type="term" value="F:translation elongation factor activity"/>
    <property type="evidence" value="ECO:0007669"/>
    <property type="project" value="UniProtKB-UniRule"/>
</dbReference>
<dbReference type="GO" id="GO:0032790">
    <property type="term" value="P:ribosome disassembly"/>
    <property type="evidence" value="ECO:0000318"/>
    <property type="project" value="GO_Central"/>
</dbReference>
<dbReference type="CDD" id="cd01886">
    <property type="entry name" value="EF-G"/>
    <property type="match status" value="1"/>
</dbReference>
<dbReference type="CDD" id="cd16262">
    <property type="entry name" value="EFG_III"/>
    <property type="match status" value="1"/>
</dbReference>
<dbReference type="CDD" id="cd01434">
    <property type="entry name" value="EFG_mtEFG1_IV"/>
    <property type="match status" value="1"/>
</dbReference>
<dbReference type="CDD" id="cd03713">
    <property type="entry name" value="EFG_mtEFG_C"/>
    <property type="match status" value="1"/>
</dbReference>
<dbReference type="CDD" id="cd04088">
    <property type="entry name" value="EFG_mtEFG_II"/>
    <property type="match status" value="1"/>
</dbReference>
<dbReference type="FunFam" id="2.40.30.10:FF:000006">
    <property type="entry name" value="Elongation factor G"/>
    <property type="match status" value="1"/>
</dbReference>
<dbReference type="FunFam" id="3.30.230.10:FF:000003">
    <property type="entry name" value="Elongation factor G"/>
    <property type="match status" value="1"/>
</dbReference>
<dbReference type="FunFam" id="3.30.70.240:FF:000001">
    <property type="entry name" value="Elongation factor G"/>
    <property type="match status" value="1"/>
</dbReference>
<dbReference type="FunFam" id="3.30.70.870:FF:000001">
    <property type="entry name" value="Elongation factor G"/>
    <property type="match status" value="1"/>
</dbReference>
<dbReference type="FunFam" id="3.40.50.300:FF:000029">
    <property type="entry name" value="Elongation factor G"/>
    <property type="match status" value="1"/>
</dbReference>
<dbReference type="Gene3D" id="3.30.230.10">
    <property type="match status" value="1"/>
</dbReference>
<dbReference type="Gene3D" id="3.30.70.240">
    <property type="match status" value="1"/>
</dbReference>
<dbReference type="Gene3D" id="3.30.70.870">
    <property type="entry name" value="Elongation Factor G (Translational Gtpase), domain 3"/>
    <property type="match status" value="1"/>
</dbReference>
<dbReference type="Gene3D" id="3.40.50.300">
    <property type="entry name" value="P-loop containing nucleotide triphosphate hydrolases"/>
    <property type="match status" value="1"/>
</dbReference>
<dbReference type="Gene3D" id="2.40.30.10">
    <property type="entry name" value="Translation factors"/>
    <property type="match status" value="1"/>
</dbReference>
<dbReference type="HAMAP" id="MF_00054_B">
    <property type="entry name" value="EF_G_EF_2_B"/>
    <property type="match status" value="1"/>
</dbReference>
<dbReference type="InterPro" id="IPR041095">
    <property type="entry name" value="EFG_II"/>
</dbReference>
<dbReference type="InterPro" id="IPR009022">
    <property type="entry name" value="EFG_III"/>
</dbReference>
<dbReference type="InterPro" id="IPR035647">
    <property type="entry name" value="EFG_III/V"/>
</dbReference>
<dbReference type="InterPro" id="IPR047872">
    <property type="entry name" value="EFG_IV"/>
</dbReference>
<dbReference type="InterPro" id="IPR035649">
    <property type="entry name" value="EFG_V"/>
</dbReference>
<dbReference type="InterPro" id="IPR000640">
    <property type="entry name" value="EFG_V-like"/>
</dbReference>
<dbReference type="InterPro" id="IPR004161">
    <property type="entry name" value="EFTu-like_2"/>
</dbReference>
<dbReference type="InterPro" id="IPR031157">
    <property type="entry name" value="G_TR_CS"/>
</dbReference>
<dbReference type="InterPro" id="IPR027417">
    <property type="entry name" value="P-loop_NTPase"/>
</dbReference>
<dbReference type="InterPro" id="IPR020568">
    <property type="entry name" value="Ribosomal_Su5_D2-typ_SF"/>
</dbReference>
<dbReference type="InterPro" id="IPR014721">
    <property type="entry name" value="Ribsml_uS5_D2-typ_fold_subgr"/>
</dbReference>
<dbReference type="InterPro" id="IPR005225">
    <property type="entry name" value="Small_GTP-bd"/>
</dbReference>
<dbReference type="InterPro" id="IPR000795">
    <property type="entry name" value="T_Tr_GTP-bd_dom"/>
</dbReference>
<dbReference type="InterPro" id="IPR009000">
    <property type="entry name" value="Transl_B-barrel_sf"/>
</dbReference>
<dbReference type="InterPro" id="IPR004540">
    <property type="entry name" value="Transl_elong_EFG/EF2"/>
</dbReference>
<dbReference type="InterPro" id="IPR005517">
    <property type="entry name" value="Transl_elong_EFG/EF2_IV"/>
</dbReference>
<dbReference type="NCBIfam" id="TIGR00484">
    <property type="entry name" value="EF-G"/>
    <property type="match status" value="1"/>
</dbReference>
<dbReference type="NCBIfam" id="NF009381">
    <property type="entry name" value="PRK12740.1-5"/>
    <property type="match status" value="1"/>
</dbReference>
<dbReference type="NCBIfam" id="TIGR00231">
    <property type="entry name" value="small_GTP"/>
    <property type="match status" value="1"/>
</dbReference>
<dbReference type="PANTHER" id="PTHR43261:SF1">
    <property type="entry name" value="RIBOSOME-RELEASING FACTOR 2, MITOCHONDRIAL"/>
    <property type="match status" value="1"/>
</dbReference>
<dbReference type="PANTHER" id="PTHR43261">
    <property type="entry name" value="TRANSLATION ELONGATION FACTOR G-RELATED"/>
    <property type="match status" value="1"/>
</dbReference>
<dbReference type="Pfam" id="PF00679">
    <property type="entry name" value="EFG_C"/>
    <property type="match status" value="1"/>
</dbReference>
<dbReference type="Pfam" id="PF14492">
    <property type="entry name" value="EFG_III"/>
    <property type="match status" value="1"/>
</dbReference>
<dbReference type="Pfam" id="PF03764">
    <property type="entry name" value="EFG_IV"/>
    <property type="match status" value="1"/>
</dbReference>
<dbReference type="Pfam" id="PF00009">
    <property type="entry name" value="GTP_EFTU"/>
    <property type="match status" value="1"/>
</dbReference>
<dbReference type="Pfam" id="PF03144">
    <property type="entry name" value="GTP_EFTU_D2"/>
    <property type="match status" value="1"/>
</dbReference>
<dbReference type="PRINTS" id="PR00315">
    <property type="entry name" value="ELONGATNFCT"/>
</dbReference>
<dbReference type="SMART" id="SM00838">
    <property type="entry name" value="EFG_C"/>
    <property type="match status" value="1"/>
</dbReference>
<dbReference type="SMART" id="SM00889">
    <property type="entry name" value="EFG_IV"/>
    <property type="match status" value="1"/>
</dbReference>
<dbReference type="SUPFAM" id="SSF54980">
    <property type="entry name" value="EF-G C-terminal domain-like"/>
    <property type="match status" value="2"/>
</dbReference>
<dbReference type="SUPFAM" id="SSF52540">
    <property type="entry name" value="P-loop containing nucleoside triphosphate hydrolases"/>
    <property type="match status" value="1"/>
</dbReference>
<dbReference type="SUPFAM" id="SSF54211">
    <property type="entry name" value="Ribosomal protein S5 domain 2-like"/>
    <property type="match status" value="1"/>
</dbReference>
<dbReference type="SUPFAM" id="SSF50447">
    <property type="entry name" value="Translation proteins"/>
    <property type="match status" value="1"/>
</dbReference>
<dbReference type="PROSITE" id="PS00301">
    <property type="entry name" value="G_TR_1"/>
    <property type="match status" value="1"/>
</dbReference>
<dbReference type="PROSITE" id="PS51722">
    <property type="entry name" value="G_TR_2"/>
    <property type="match status" value="1"/>
</dbReference>
<accession>P47335</accession>
<accession>Q49196</accession>
<accession>Q49265</accession>
<accession>Q49303</accession>
<proteinExistence type="inferred from homology"/>